<keyword id="KW-0256">Endoplasmic reticulum</keyword>
<keyword id="KW-0349">Heme</keyword>
<keyword id="KW-0408">Iron</keyword>
<keyword id="KW-0443">Lipid metabolism</keyword>
<keyword id="KW-0456">Lyase</keyword>
<keyword id="KW-0472">Membrane</keyword>
<keyword id="KW-0479">Metal-binding</keyword>
<keyword id="KW-0492">Microsome</keyword>
<keyword id="KW-0503">Monooxygenase</keyword>
<keyword id="KW-0560">Oxidoreductase</keyword>
<keyword id="KW-1185">Reference proteome</keyword>
<keyword id="KW-0755">Steroidogenesis</keyword>
<sequence>MWELVALLLLTLAYFFWSKSKTCGAKSPKSLPFLPLVGSLPFIPRHGHPHVNFFKLQEKYGPIYSLRLGSTTTVIIGQYQLAKEVLVKKGKEFSGRPHMVTLGLLSDQGKGIAFADSGGSWQLHRKLALSSFALFRDGNQKLEKIICQKASSLCDFLLTHNEESIDLSEPIFNSITNIICIICFGISYENRDPILATIKSFTEGILNSLGNDHLVDIFPWLTIFPNKTVDMIKKNVKIRDEVLSGILEKCKEKFNSDSISSLMDLLIQAKTNADNNNTSEGQGSNAFSDMHILATIADIFGAGIETTASVLSWIIAFLLHNPEVKKKIQKEIDQNIGFSRTPTFNDRNHLLMLEATIREVLRIRPVAPMLIPHRANSDMSIGEFSIPKFTPVIINLWALHHSEKEWDQPDRFMPERFLDPTGSHLITPSLSYLPFGAGARSCIGEVLARQELFLFMAHLLQRFDLDVPDDEQPPCLKGNANVVFLIDPFKVKITVRQAWKDAQAEVNTWRP</sequence>
<protein>
    <recommendedName>
        <fullName>Steroid 17-alpha-hydroxylase/17,20 lyase</fullName>
        <ecNumber evidence="2">1.14.14.19</ecNumber>
    </recommendedName>
    <alternativeName>
        <fullName>17-alpha-hydroxyprogesterone aldolase</fullName>
        <ecNumber evidence="2">1.14.14.32</ecNumber>
    </alternativeName>
    <alternativeName>
        <fullName>CYPXVII</fullName>
    </alternativeName>
    <alternativeName>
        <fullName>Cytochrome P450 17A1</fullName>
    </alternativeName>
    <alternativeName>
        <fullName>Cytochrome P450-C17</fullName>
        <shortName>Cytochrome P450c17</shortName>
    </alternativeName>
    <alternativeName>
        <fullName>Steroid 17-alpha-monooxygenase</fullName>
    </alternativeName>
</protein>
<evidence type="ECO:0000250" key="1"/>
<evidence type="ECO:0000250" key="2">
    <source>
        <dbReference type="UniProtKB" id="P05093"/>
    </source>
</evidence>
<evidence type="ECO:0000305" key="3"/>
<feature type="chain" id="PRO_0000051934" description="Steroid 17-alpha-hydroxylase/17,20 lyase">
    <location>
        <begin position="1"/>
        <end position="511"/>
    </location>
</feature>
<feature type="binding site" description="axial binding residue" evidence="1">
    <location>
        <position position="442"/>
    </location>
    <ligand>
        <name>heme</name>
        <dbReference type="ChEBI" id="CHEBI:30413"/>
    </ligand>
    <ligandPart>
        <name>Fe</name>
        <dbReference type="ChEBI" id="CHEBI:18248"/>
    </ligandPart>
</feature>
<proteinExistence type="evidence at transcript level"/>
<organism>
    <name type="scientific">Mesocricetus auratus</name>
    <name type="common">Golden hamster</name>
    <dbReference type="NCBI Taxonomy" id="10036"/>
    <lineage>
        <taxon>Eukaryota</taxon>
        <taxon>Metazoa</taxon>
        <taxon>Chordata</taxon>
        <taxon>Craniata</taxon>
        <taxon>Vertebrata</taxon>
        <taxon>Euteleostomi</taxon>
        <taxon>Mammalia</taxon>
        <taxon>Eutheria</taxon>
        <taxon>Euarchontoglires</taxon>
        <taxon>Glires</taxon>
        <taxon>Rodentia</taxon>
        <taxon>Myomorpha</taxon>
        <taxon>Muroidea</taxon>
        <taxon>Cricetidae</taxon>
        <taxon>Cricetinae</taxon>
        <taxon>Mesocricetus</taxon>
    </lineage>
</organism>
<dbReference type="EC" id="1.14.14.19" evidence="2"/>
<dbReference type="EC" id="1.14.14.32" evidence="2"/>
<dbReference type="EMBL" id="U66494">
    <property type="protein sequence ID" value="AAB07494.1"/>
    <property type="molecule type" value="mRNA"/>
</dbReference>
<dbReference type="RefSeq" id="NP_001268860.1">
    <property type="nucleotide sequence ID" value="NM_001281931.1"/>
</dbReference>
<dbReference type="SMR" id="P70687"/>
<dbReference type="STRING" id="10036.ENSMAUP00000015990"/>
<dbReference type="GeneID" id="101831170"/>
<dbReference type="KEGG" id="maua:101831170"/>
<dbReference type="CTD" id="1586"/>
<dbReference type="eggNOG" id="KOG0156">
    <property type="taxonomic scope" value="Eukaryota"/>
</dbReference>
<dbReference type="OrthoDB" id="1470350at2759"/>
<dbReference type="UniPathway" id="UPA00788"/>
<dbReference type="Proteomes" id="UP000189706">
    <property type="component" value="Unplaced"/>
</dbReference>
<dbReference type="GO" id="GO:0005789">
    <property type="term" value="C:endoplasmic reticulum membrane"/>
    <property type="evidence" value="ECO:0007669"/>
    <property type="project" value="UniProtKB-SubCell"/>
</dbReference>
<dbReference type="GO" id="GO:0020037">
    <property type="term" value="F:heme binding"/>
    <property type="evidence" value="ECO:0000250"/>
    <property type="project" value="UniProtKB"/>
</dbReference>
<dbReference type="GO" id="GO:0005506">
    <property type="term" value="F:iron ion binding"/>
    <property type="evidence" value="ECO:0007669"/>
    <property type="project" value="InterPro"/>
</dbReference>
<dbReference type="GO" id="GO:0016829">
    <property type="term" value="F:lyase activity"/>
    <property type="evidence" value="ECO:0007669"/>
    <property type="project" value="UniProtKB-KW"/>
</dbReference>
<dbReference type="GO" id="GO:0004508">
    <property type="term" value="F:steroid 17-alpha-monooxygenase activity"/>
    <property type="evidence" value="ECO:0000250"/>
    <property type="project" value="UniProtKB"/>
</dbReference>
<dbReference type="GO" id="GO:0006704">
    <property type="term" value="P:glucocorticoid biosynthetic process"/>
    <property type="evidence" value="ECO:0007669"/>
    <property type="project" value="UniProtKB-UniPathway"/>
</dbReference>
<dbReference type="GO" id="GO:0042446">
    <property type="term" value="P:hormone biosynthetic process"/>
    <property type="evidence" value="ECO:0000250"/>
    <property type="project" value="UniProtKB"/>
</dbReference>
<dbReference type="GO" id="GO:0042448">
    <property type="term" value="P:progesterone metabolic process"/>
    <property type="evidence" value="ECO:0000250"/>
    <property type="project" value="UniProtKB"/>
</dbReference>
<dbReference type="GO" id="GO:0008202">
    <property type="term" value="P:steroid metabolic process"/>
    <property type="evidence" value="ECO:0000250"/>
    <property type="project" value="UniProtKB"/>
</dbReference>
<dbReference type="CDD" id="cd20673">
    <property type="entry name" value="CYP17A1"/>
    <property type="match status" value="1"/>
</dbReference>
<dbReference type="FunFam" id="1.10.630.10:FF:000002">
    <property type="entry name" value="Cytochrome P450 1A1"/>
    <property type="match status" value="1"/>
</dbReference>
<dbReference type="Gene3D" id="1.10.630.10">
    <property type="entry name" value="Cytochrome P450"/>
    <property type="match status" value="1"/>
</dbReference>
<dbReference type="InterPro" id="IPR001128">
    <property type="entry name" value="Cyt_P450"/>
</dbReference>
<dbReference type="InterPro" id="IPR017972">
    <property type="entry name" value="Cyt_P450_CS"/>
</dbReference>
<dbReference type="InterPro" id="IPR002401">
    <property type="entry name" value="Cyt_P450_E_grp-I"/>
</dbReference>
<dbReference type="InterPro" id="IPR036396">
    <property type="entry name" value="Cyt_P450_sf"/>
</dbReference>
<dbReference type="PANTHER" id="PTHR24289">
    <property type="entry name" value="STEROID 17-ALPHA-HYDROXYLASE/17,20 LYASE"/>
    <property type="match status" value="1"/>
</dbReference>
<dbReference type="PANTHER" id="PTHR24289:SF13">
    <property type="entry name" value="STEROID 17-ALPHA-HYDROXYLASE_17,20 LYASE"/>
    <property type="match status" value="1"/>
</dbReference>
<dbReference type="Pfam" id="PF00067">
    <property type="entry name" value="p450"/>
    <property type="match status" value="1"/>
</dbReference>
<dbReference type="PRINTS" id="PR00463">
    <property type="entry name" value="EP450I"/>
</dbReference>
<dbReference type="PRINTS" id="PR00385">
    <property type="entry name" value="P450"/>
</dbReference>
<dbReference type="SUPFAM" id="SSF48264">
    <property type="entry name" value="Cytochrome P450"/>
    <property type="match status" value="1"/>
</dbReference>
<dbReference type="PROSITE" id="PS00086">
    <property type="entry name" value="CYTOCHROME_P450"/>
    <property type="match status" value="1"/>
</dbReference>
<accession>P70687</accession>
<gene>
    <name type="primary">CYP17A1</name>
    <name type="synonym">CYP17</name>
</gene>
<reference key="1">
    <citation type="journal article" date="1995" name="Ann. N. Y. Acad. Sci.">
        <title>Cloning and expression of hamster adrenal cytochrome P450C17 cDNA.</title>
        <authorList>
            <person name="Cloutier M."/>
            <person name="Fleury A."/>
            <person name="Courtemanche J."/>
            <person name="Ducharme L."/>
            <person name="Mason J.I."/>
            <person name="Lehoux J.-G."/>
        </authorList>
    </citation>
    <scope>NUCLEOTIDE SEQUENCE [MRNA]</scope>
    <source>
        <tissue>Adrenal gland</tissue>
    </source>
</reference>
<name>CP17A_MESAU</name>
<comment type="function">
    <text evidence="2">A cytochrome P450 monooxygenase involved in corticoid and androgen biosynthesis. Catalyzes 17-alpha hydroxylation of C21 steroids, which is common for both pathways. A second oxidative step, required only for androgen synthesis, involves an acyl-carbon cleavage. The 17-alpha hydroxy intermediates, as part of adrenal glucocorticoids biosynthesis pathway, are precursors of cortisol. Hydroxylates steroid hormones, pregnenolone and progesterone to form 17-alpha hydroxy metabolites, followed by the cleavage of the C17-C20 bond to form C19 steroids, dehydroepiandrosterone (DHEA) and androstenedione. Has 16-alpha hydroxylase activity. Catalyzes 16-alpha hydroxylation of 17-alpha hydroxy pregnenolone, followed by the cleavage of the C17-C20 bond to form 16-alpha-hydroxy DHEA. Also 16-alpha hydroxylates androgens, relevant for estriol synthesis. Mechanistically, uses molecular oxygen inserting one oxygen atom into a substrate, and reducing the second into a water molecule, with two electrons provided by NADPH via cytochrome P450 reductase (CPR; NADPH-ferrihemoprotein reductase).</text>
</comment>
<comment type="catalytic activity">
    <reaction evidence="2">
        <text>a C21-steroid + reduced [NADPH--hemoprotein reductase] + O2 = a 17alpha-hydroxy-C21-steroid + oxidized [NADPH--hemoprotein reductase] + H2O + H(+)</text>
        <dbReference type="Rhea" id="RHEA:65760"/>
        <dbReference type="Rhea" id="RHEA-COMP:11964"/>
        <dbReference type="Rhea" id="RHEA-COMP:11965"/>
        <dbReference type="ChEBI" id="CHEBI:15377"/>
        <dbReference type="ChEBI" id="CHEBI:15378"/>
        <dbReference type="ChEBI" id="CHEBI:15379"/>
        <dbReference type="ChEBI" id="CHEBI:57618"/>
        <dbReference type="ChEBI" id="CHEBI:58210"/>
        <dbReference type="ChEBI" id="CHEBI:61313"/>
        <dbReference type="ChEBI" id="CHEBI:138141"/>
        <dbReference type="EC" id="1.14.14.19"/>
    </reaction>
    <physiologicalReaction direction="left-to-right" evidence="2">
        <dbReference type="Rhea" id="RHEA:65761"/>
    </physiologicalReaction>
</comment>
<comment type="catalytic activity">
    <reaction evidence="2">
        <text>progesterone + reduced [NADPH--hemoprotein reductase] + O2 = 17alpha-hydroxyprogesterone + oxidized [NADPH--hemoprotein reductase] + H2O + H(+)</text>
        <dbReference type="Rhea" id="RHEA:46308"/>
        <dbReference type="Rhea" id="RHEA-COMP:11964"/>
        <dbReference type="Rhea" id="RHEA-COMP:11965"/>
        <dbReference type="ChEBI" id="CHEBI:15377"/>
        <dbReference type="ChEBI" id="CHEBI:15378"/>
        <dbReference type="ChEBI" id="CHEBI:15379"/>
        <dbReference type="ChEBI" id="CHEBI:17026"/>
        <dbReference type="ChEBI" id="CHEBI:17252"/>
        <dbReference type="ChEBI" id="CHEBI:57618"/>
        <dbReference type="ChEBI" id="CHEBI:58210"/>
        <dbReference type="EC" id="1.14.14.19"/>
    </reaction>
    <physiologicalReaction direction="left-to-right" evidence="2">
        <dbReference type="Rhea" id="RHEA:46309"/>
    </physiologicalReaction>
</comment>
<comment type="catalytic activity">
    <reaction evidence="2">
        <text>pregnenolone + reduced [NADPH--hemoprotein reductase] + O2 = 17alpha-hydroxypregnenolone + oxidized [NADPH--hemoprotein reductase] + H2O + H(+)</text>
        <dbReference type="Rhea" id="RHEA:50236"/>
        <dbReference type="Rhea" id="RHEA-COMP:11964"/>
        <dbReference type="Rhea" id="RHEA-COMP:11965"/>
        <dbReference type="ChEBI" id="CHEBI:15377"/>
        <dbReference type="ChEBI" id="CHEBI:15378"/>
        <dbReference type="ChEBI" id="CHEBI:15379"/>
        <dbReference type="ChEBI" id="CHEBI:16581"/>
        <dbReference type="ChEBI" id="CHEBI:28750"/>
        <dbReference type="ChEBI" id="CHEBI:57618"/>
        <dbReference type="ChEBI" id="CHEBI:58210"/>
        <dbReference type="EC" id="1.14.14.19"/>
    </reaction>
    <physiologicalReaction direction="left-to-right" evidence="2">
        <dbReference type="Rhea" id="RHEA:50237"/>
    </physiologicalReaction>
</comment>
<comment type="catalytic activity">
    <reaction evidence="2">
        <text>17alpha-hydroxyprogesterone + reduced [NADPH--hemoprotein reductase] + O2 = androst-4-ene-3,17-dione + acetate + oxidized [NADPH--hemoprotein reductase] + H2O + 2 H(+)</text>
        <dbReference type="Rhea" id="RHEA:14753"/>
        <dbReference type="Rhea" id="RHEA-COMP:11964"/>
        <dbReference type="Rhea" id="RHEA-COMP:11965"/>
        <dbReference type="ChEBI" id="CHEBI:15377"/>
        <dbReference type="ChEBI" id="CHEBI:15378"/>
        <dbReference type="ChEBI" id="CHEBI:15379"/>
        <dbReference type="ChEBI" id="CHEBI:16422"/>
        <dbReference type="ChEBI" id="CHEBI:17252"/>
        <dbReference type="ChEBI" id="CHEBI:30089"/>
        <dbReference type="ChEBI" id="CHEBI:57618"/>
        <dbReference type="ChEBI" id="CHEBI:58210"/>
        <dbReference type="EC" id="1.14.14.32"/>
    </reaction>
    <physiologicalReaction direction="left-to-right" evidence="2">
        <dbReference type="Rhea" id="RHEA:14754"/>
    </physiologicalReaction>
</comment>
<comment type="catalytic activity">
    <reaction evidence="2">
        <text>17alpha-hydroxyprogesterone + reduced [NADPH--hemoprotein reductase] + O2 = 16alpha,17alpha-dihydroxyprogesterone + oxidized [NADPH--hemoprotein reductase] + H2O + H(+)</text>
        <dbReference type="Rhea" id="RHEA:53216"/>
        <dbReference type="Rhea" id="RHEA-COMP:11964"/>
        <dbReference type="Rhea" id="RHEA-COMP:11965"/>
        <dbReference type="ChEBI" id="CHEBI:763"/>
        <dbReference type="ChEBI" id="CHEBI:15377"/>
        <dbReference type="ChEBI" id="CHEBI:15378"/>
        <dbReference type="ChEBI" id="CHEBI:15379"/>
        <dbReference type="ChEBI" id="CHEBI:17252"/>
        <dbReference type="ChEBI" id="CHEBI:57618"/>
        <dbReference type="ChEBI" id="CHEBI:58210"/>
    </reaction>
    <physiologicalReaction direction="left-to-right" evidence="2">
        <dbReference type="Rhea" id="RHEA:53217"/>
    </physiologicalReaction>
</comment>
<comment type="catalytic activity">
    <reaction evidence="2">
        <text>16alpha,17alpha-dihydroxyprogesterone + reduced [NADPH--hemoprotein reductase] + O2 = 6beta,16alpha,17alpha-trihydroxyprogesterone + oxidized [NADPH--hemoprotein reductase] + H2O + H(+)</text>
        <dbReference type="Rhea" id="RHEA:53220"/>
        <dbReference type="Rhea" id="RHEA-COMP:11964"/>
        <dbReference type="Rhea" id="RHEA-COMP:11965"/>
        <dbReference type="ChEBI" id="CHEBI:763"/>
        <dbReference type="ChEBI" id="CHEBI:15377"/>
        <dbReference type="ChEBI" id="CHEBI:15378"/>
        <dbReference type="ChEBI" id="CHEBI:15379"/>
        <dbReference type="ChEBI" id="CHEBI:57618"/>
        <dbReference type="ChEBI" id="CHEBI:58210"/>
        <dbReference type="ChEBI" id="CHEBI:137046"/>
    </reaction>
    <physiologicalReaction direction="left-to-right" evidence="2">
        <dbReference type="Rhea" id="RHEA:53221"/>
    </physiologicalReaction>
</comment>
<comment type="catalytic activity">
    <reaction evidence="2">
        <text>17alpha-hydroxypregnenolone + reduced [NADPH--hemoprotein reductase] + O2 = 3beta-hydroxyandrost-5-en-17-one + acetate + oxidized [NADPH--hemoprotein reductase] + H2O + 2 H(+)</text>
        <dbReference type="Rhea" id="RHEA:50244"/>
        <dbReference type="Rhea" id="RHEA-COMP:11964"/>
        <dbReference type="Rhea" id="RHEA-COMP:11965"/>
        <dbReference type="ChEBI" id="CHEBI:15377"/>
        <dbReference type="ChEBI" id="CHEBI:15378"/>
        <dbReference type="ChEBI" id="CHEBI:15379"/>
        <dbReference type="ChEBI" id="CHEBI:28689"/>
        <dbReference type="ChEBI" id="CHEBI:28750"/>
        <dbReference type="ChEBI" id="CHEBI:30089"/>
        <dbReference type="ChEBI" id="CHEBI:57618"/>
        <dbReference type="ChEBI" id="CHEBI:58210"/>
        <dbReference type="EC" id="1.14.14.32"/>
    </reaction>
    <physiologicalReaction direction="left-to-right" evidence="2">
        <dbReference type="Rhea" id="RHEA:50245"/>
    </physiologicalReaction>
</comment>
<comment type="catalytic activity">
    <reaction evidence="2">
        <text>16alpha,17alpha-dihydroxypregnenolone + reduced [NADPH--hemoprotein reductase] + O2 = 3beta,16alpha-dihydroxy-androst-5-en-17-one + acetate + oxidized [NADPH--hemoprotein reductase] + H2O + 2 H(+)</text>
        <dbReference type="Rhea" id="RHEA:53224"/>
        <dbReference type="Rhea" id="RHEA-COMP:11964"/>
        <dbReference type="Rhea" id="RHEA-COMP:11965"/>
        <dbReference type="ChEBI" id="CHEBI:15377"/>
        <dbReference type="ChEBI" id="CHEBI:15378"/>
        <dbReference type="ChEBI" id="CHEBI:15379"/>
        <dbReference type="ChEBI" id="CHEBI:27771"/>
        <dbReference type="ChEBI" id="CHEBI:30089"/>
        <dbReference type="ChEBI" id="CHEBI:57618"/>
        <dbReference type="ChEBI" id="CHEBI:58210"/>
        <dbReference type="ChEBI" id="CHEBI:137049"/>
    </reaction>
    <physiologicalReaction direction="left-to-right" evidence="2">
        <dbReference type="Rhea" id="RHEA:53225"/>
    </physiologicalReaction>
</comment>
<comment type="catalytic activity">
    <reaction evidence="2">
        <text>3beta-hydroxyandrost-5-en-17-one + reduced [NADPH--hemoprotein reductase] + O2 = 3beta,16alpha-dihydroxy-androst-5-en-17-one + oxidized [NADPH--hemoprotein reductase] + H2O + H(+)</text>
        <dbReference type="Rhea" id="RHEA:47220"/>
        <dbReference type="Rhea" id="RHEA-COMP:11964"/>
        <dbReference type="Rhea" id="RHEA-COMP:11965"/>
        <dbReference type="ChEBI" id="CHEBI:15377"/>
        <dbReference type="ChEBI" id="CHEBI:15378"/>
        <dbReference type="ChEBI" id="CHEBI:15379"/>
        <dbReference type="ChEBI" id="CHEBI:27771"/>
        <dbReference type="ChEBI" id="CHEBI:28689"/>
        <dbReference type="ChEBI" id="CHEBI:57618"/>
        <dbReference type="ChEBI" id="CHEBI:58210"/>
    </reaction>
    <physiologicalReaction direction="left-to-right" evidence="2">
        <dbReference type="Rhea" id="RHEA:47221"/>
    </physiologicalReaction>
</comment>
<comment type="catalytic activity">
    <reaction evidence="2">
        <text>androst-4-ene-3,17-dione + reduced [NADPH--hemoprotein reductase] + O2 = 16alpha-hydroxyandrost-4-ene-3,17-dione + oxidized [NADPH--hemoprotein reductase] + H2O + H(+)</text>
        <dbReference type="Rhea" id="RHEA:53228"/>
        <dbReference type="Rhea" id="RHEA-COMP:11964"/>
        <dbReference type="Rhea" id="RHEA-COMP:11965"/>
        <dbReference type="ChEBI" id="CHEBI:15377"/>
        <dbReference type="ChEBI" id="CHEBI:15378"/>
        <dbReference type="ChEBI" id="CHEBI:15379"/>
        <dbReference type="ChEBI" id="CHEBI:16422"/>
        <dbReference type="ChEBI" id="CHEBI:27582"/>
        <dbReference type="ChEBI" id="CHEBI:57618"/>
        <dbReference type="ChEBI" id="CHEBI:58210"/>
    </reaction>
    <physiologicalReaction direction="left-to-right" evidence="2">
        <dbReference type="Rhea" id="RHEA:53229"/>
    </physiologicalReaction>
</comment>
<comment type="cofactor">
    <cofactor evidence="2">
        <name>heme</name>
        <dbReference type="ChEBI" id="CHEBI:30413"/>
    </cofactor>
</comment>
<comment type="activity regulation">
    <text evidence="2">Regulated predominantly by intracellular cAMP levels. The 17,20-lyase activity is stimulated by cytochrome b5, which acts as an allosteric effector increasing the Vmax of the lyase activity.</text>
</comment>
<comment type="pathway">
    <text evidence="2">Steroid hormone biosynthesis.</text>
</comment>
<comment type="pathway">
    <text evidence="2">Steroid biosynthesis; glucocorticoid biosynthesis.</text>
</comment>
<comment type="subcellular location">
    <subcellularLocation>
        <location evidence="2">Endoplasmic reticulum membrane</location>
    </subcellularLocation>
    <subcellularLocation>
        <location evidence="2">Microsome membrane</location>
    </subcellularLocation>
</comment>
<comment type="similarity">
    <text evidence="3">Belongs to the cytochrome P450 family.</text>
</comment>